<reference key="1">
    <citation type="journal article" date="2010" name="PLoS Genet.">
        <title>Genome sequence of the plant growth promoting endophytic bacterium Enterobacter sp. 638.</title>
        <authorList>
            <person name="Taghavi S."/>
            <person name="van der Lelie D."/>
            <person name="Hoffman A."/>
            <person name="Zhang Y.B."/>
            <person name="Walla M.D."/>
            <person name="Vangronsveld J."/>
            <person name="Newman L."/>
            <person name="Monchy S."/>
        </authorList>
    </citation>
    <scope>NUCLEOTIDE SEQUENCE [LARGE SCALE GENOMIC DNA]</scope>
    <source>
        <strain>638</strain>
    </source>
</reference>
<accession>A4W9A5</accession>
<comment type="function">
    <text evidence="1">Catalyzes the condensation reaction of fatty acid synthesis by the addition to an acyl acceptor of two carbons from malonyl-ACP. Catalyzes the first condensation reaction which initiates fatty acid synthesis and may therefore play a role in governing the total rate of fatty acid production. Possesses both acetoacetyl-ACP synthase and acetyl transacylase activities. Its substrate specificity determines the biosynthesis of branched-chain and/or straight-chain of fatty acids.</text>
</comment>
<comment type="catalytic activity">
    <reaction evidence="1">
        <text>malonyl-[ACP] + acetyl-CoA + H(+) = 3-oxobutanoyl-[ACP] + CO2 + CoA</text>
        <dbReference type="Rhea" id="RHEA:12080"/>
        <dbReference type="Rhea" id="RHEA-COMP:9623"/>
        <dbReference type="Rhea" id="RHEA-COMP:9625"/>
        <dbReference type="ChEBI" id="CHEBI:15378"/>
        <dbReference type="ChEBI" id="CHEBI:16526"/>
        <dbReference type="ChEBI" id="CHEBI:57287"/>
        <dbReference type="ChEBI" id="CHEBI:57288"/>
        <dbReference type="ChEBI" id="CHEBI:78449"/>
        <dbReference type="ChEBI" id="CHEBI:78450"/>
        <dbReference type="EC" id="2.3.1.180"/>
    </reaction>
</comment>
<comment type="pathway">
    <text evidence="1">Lipid metabolism; fatty acid biosynthesis.</text>
</comment>
<comment type="subunit">
    <text evidence="1">Homodimer.</text>
</comment>
<comment type="subcellular location">
    <subcellularLocation>
        <location evidence="1">Cytoplasm</location>
    </subcellularLocation>
</comment>
<comment type="domain">
    <text evidence="1">The last Arg residue of the ACP-binding site is essential for the weak association between ACP/AcpP and FabH.</text>
</comment>
<comment type="similarity">
    <text evidence="1">Belongs to the thiolase-like superfamily. FabH family.</text>
</comment>
<sequence length="317" mass="33724">MYTKILGTGSFLPKQVRTNADLEKMVDTSDEWIVTRTGIRERRIAAPDETVSTMGYEAGLRALEMAGVDKEEIGLIVVATTSSTHAFPSAACQIQGMMGIKGCPAFDVAAACAGFTYALSIADQYVKSGAVKYALVIGADVLARTCNPEDRGTIIIFGDGAGAVLLGQSEEQGIISTHLHADGSYGELLTLPNADRVNPDNSIFLTMAGNEVFKVAVTELAHIVDETLAANNLERSALDWLVPHQANLRIISATAKKLGMSMDNVVVTLDRHGNTSAASVPCAFDEAVRDGRIKRGQLVLLEAFGGGFTWGSALVRF</sequence>
<protein>
    <recommendedName>
        <fullName evidence="1">Beta-ketoacyl-[acyl-carrier-protein] synthase III</fullName>
        <shortName evidence="1">Beta-ketoacyl-ACP synthase III</shortName>
        <shortName evidence="1">KAS III</shortName>
        <ecNumber evidence="1">2.3.1.180</ecNumber>
    </recommendedName>
    <alternativeName>
        <fullName evidence="1">3-oxoacyl-[acyl-carrier-protein] synthase 3</fullName>
    </alternativeName>
    <alternativeName>
        <fullName evidence="1">3-oxoacyl-[acyl-carrier-protein] synthase III</fullName>
    </alternativeName>
</protein>
<organism>
    <name type="scientific">Enterobacter sp. (strain 638)</name>
    <dbReference type="NCBI Taxonomy" id="399742"/>
    <lineage>
        <taxon>Bacteria</taxon>
        <taxon>Pseudomonadati</taxon>
        <taxon>Pseudomonadota</taxon>
        <taxon>Gammaproteobacteria</taxon>
        <taxon>Enterobacterales</taxon>
        <taxon>Enterobacteriaceae</taxon>
        <taxon>Enterobacter</taxon>
    </lineage>
</organism>
<keyword id="KW-0012">Acyltransferase</keyword>
<keyword id="KW-0963">Cytoplasm</keyword>
<keyword id="KW-0275">Fatty acid biosynthesis</keyword>
<keyword id="KW-0276">Fatty acid metabolism</keyword>
<keyword id="KW-0444">Lipid biosynthesis</keyword>
<keyword id="KW-0443">Lipid metabolism</keyword>
<keyword id="KW-0511">Multifunctional enzyme</keyword>
<keyword id="KW-0808">Transferase</keyword>
<proteinExistence type="inferred from homology"/>
<name>FABH_ENT38</name>
<evidence type="ECO:0000255" key="1">
    <source>
        <dbReference type="HAMAP-Rule" id="MF_01815"/>
    </source>
</evidence>
<dbReference type="EC" id="2.3.1.180" evidence="1"/>
<dbReference type="EMBL" id="CP000653">
    <property type="protein sequence ID" value="ABP60285.1"/>
    <property type="molecule type" value="Genomic_DNA"/>
</dbReference>
<dbReference type="RefSeq" id="WP_012017002.1">
    <property type="nucleotide sequence ID" value="NC_009436.1"/>
</dbReference>
<dbReference type="SMR" id="A4W9A5"/>
<dbReference type="STRING" id="399742.Ent638_1606"/>
<dbReference type="KEGG" id="ent:Ent638_1606"/>
<dbReference type="eggNOG" id="COG0332">
    <property type="taxonomic scope" value="Bacteria"/>
</dbReference>
<dbReference type="HOGENOM" id="CLU_039592_3_1_6"/>
<dbReference type="OrthoDB" id="9815506at2"/>
<dbReference type="UniPathway" id="UPA00094"/>
<dbReference type="Proteomes" id="UP000000230">
    <property type="component" value="Chromosome"/>
</dbReference>
<dbReference type="GO" id="GO:0005737">
    <property type="term" value="C:cytoplasm"/>
    <property type="evidence" value="ECO:0007669"/>
    <property type="project" value="UniProtKB-SubCell"/>
</dbReference>
<dbReference type="GO" id="GO:0004315">
    <property type="term" value="F:3-oxoacyl-[acyl-carrier-protein] synthase activity"/>
    <property type="evidence" value="ECO:0007669"/>
    <property type="project" value="InterPro"/>
</dbReference>
<dbReference type="GO" id="GO:0033818">
    <property type="term" value="F:beta-ketoacyl-acyl-carrier-protein synthase III activity"/>
    <property type="evidence" value="ECO:0007669"/>
    <property type="project" value="UniProtKB-UniRule"/>
</dbReference>
<dbReference type="GO" id="GO:0006633">
    <property type="term" value="P:fatty acid biosynthetic process"/>
    <property type="evidence" value="ECO:0007669"/>
    <property type="project" value="UniProtKB-UniRule"/>
</dbReference>
<dbReference type="CDD" id="cd00830">
    <property type="entry name" value="KAS_III"/>
    <property type="match status" value="1"/>
</dbReference>
<dbReference type="FunFam" id="3.40.47.10:FF:000004">
    <property type="entry name" value="3-oxoacyl-[acyl-carrier-protein] synthase 3"/>
    <property type="match status" value="1"/>
</dbReference>
<dbReference type="Gene3D" id="3.40.47.10">
    <property type="match status" value="1"/>
</dbReference>
<dbReference type="HAMAP" id="MF_01815">
    <property type="entry name" value="FabH"/>
    <property type="match status" value="1"/>
</dbReference>
<dbReference type="InterPro" id="IPR013747">
    <property type="entry name" value="ACP_syn_III_C"/>
</dbReference>
<dbReference type="InterPro" id="IPR013751">
    <property type="entry name" value="ACP_syn_III_N"/>
</dbReference>
<dbReference type="InterPro" id="IPR004655">
    <property type="entry name" value="FabH"/>
</dbReference>
<dbReference type="InterPro" id="IPR016039">
    <property type="entry name" value="Thiolase-like"/>
</dbReference>
<dbReference type="NCBIfam" id="TIGR00747">
    <property type="entry name" value="fabH"/>
    <property type="match status" value="1"/>
</dbReference>
<dbReference type="NCBIfam" id="NF006829">
    <property type="entry name" value="PRK09352.1"/>
    <property type="match status" value="1"/>
</dbReference>
<dbReference type="PANTHER" id="PTHR43091">
    <property type="entry name" value="3-OXOACYL-[ACYL-CARRIER-PROTEIN] SYNTHASE"/>
    <property type="match status" value="1"/>
</dbReference>
<dbReference type="PANTHER" id="PTHR43091:SF1">
    <property type="entry name" value="BETA-KETOACYL-[ACYL-CARRIER-PROTEIN] SYNTHASE III, CHLOROPLASTIC"/>
    <property type="match status" value="1"/>
</dbReference>
<dbReference type="Pfam" id="PF08545">
    <property type="entry name" value="ACP_syn_III"/>
    <property type="match status" value="1"/>
</dbReference>
<dbReference type="Pfam" id="PF08541">
    <property type="entry name" value="ACP_syn_III_C"/>
    <property type="match status" value="1"/>
</dbReference>
<dbReference type="SUPFAM" id="SSF53901">
    <property type="entry name" value="Thiolase-like"/>
    <property type="match status" value="1"/>
</dbReference>
<gene>
    <name evidence="1" type="primary">fabH</name>
    <name type="ordered locus">Ent638_1606</name>
</gene>
<feature type="chain" id="PRO_1000070230" description="Beta-ketoacyl-[acyl-carrier-protein] synthase III">
    <location>
        <begin position="1"/>
        <end position="317"/>
    </location>
</feature>
<feature type="region of interest" description="ACP-binding" evidence="1">
    <location>
        <begin position="245"/>
        <end position="249"/>
    </location>
</feature>
<feature type="active site" evidence="1">
    <location>
        <position position="112"/>
    </location>
</feature>
<feature type="active site" evidence="1">
    <location>
        <position position="244"/>
    </location>
</feature>
<feature type="active site" evidence="1">
    <location>
        <position position="274"/>
    </location>
</feature>